<protein>
    <recommendedName>
        <fullName evidence="2">Ribosomal RNA small subunit methyltransferase nep-1</fullName>
        <ecNumber evidence="2">2.1.1.-</ecNumber>
    </recommendedName>
    <alternativeName>
        <fullName evidence="2">18S rRNA (pseudouridine-N1)-methyltransferase</fullName>
    </alternativeName>
    <alternativeName>
        <fullName evidence="4">EMG1 N1-specific pseudouridine methyltransferase</fullName>
        <shortName evidence="3">EMG1 homolog</shortName>
    </alternativeName>
    <alternativeName>
        <fullName evidence="2">Ribosome biogenesis protein nep-1</fullName>
    </alternativeName>
</protein>
<proteinExistence type="inferred from homology"/>
<feature type="chain" id="PRO_0000158608" description="Ribosomal RNA small subunit methyltransferase nep-1">
    <location>
        <begin position="1"/>
        <end position="231"/>
    </location>
</feature>
<feature type="binding site" evidence="1">
    <location>
        <position position="161"/>
    </location>
    <ligand>
        <name>S-adenosyl-L-methionine</name>
        <dbReference type="ChEBI" id="CHEBI:59789"/>
    </ligand>
</feature>
<feature type="binding site" evidence="1">
    <location>
        <position position="188"/>
    </location>
    <ligand>
        <name>S-adenosyl-L-methionine</name>
        <dbReference type="ChEBI" id="CHEBI:59789"/>
    </ligand>
</feature>
<feature type="binding site" evidence="1">
    <location>
        <position position="193"/>
    </location>
    <ligand>
        <name>S-adenosyl-L-methionine</name>
        <dbReference type="ChEBI" id="CHEBI:59789"/>
    </ligand>
</feature>
<feature type="binding site" evidence="1">
    <location>
        <begin position="206"/>
        <end position="211"/>
    </location>
    <ligand>
        <name>S-adenosyl-L-methionine</name>
        <dbReference type="ChEBI" id="CHEBI:59789"/>
    </ligand>
</feature>
<feature type="site" description="Interaction with substrate rRNA" evidence="1">
    <location>
        <position position="69"/>
    </location>
</feature>
<feature type="site" description="Stabilizes Arg-69" evidence="1">
    <location>
        <position position="71"/>
    </location>
</feature>
<feature type="site" description="Interaction with substrate rRNA" evidence="1">
    <location>
        <position position="110"/>
    </location>
</feature>
<feature type="site" description="Interaction with substrate rRNA" evidence="1">
    <location>
        <position position="113"/>
    </location>
</feature>
<feature type="site" description="Interaction with substrate rRNA" evidence="1">
    <location>
        <position position="117"/>
    </location>
</feature>
<name>NEP1_CAEEL</name>
<reference key="1">
    <citation type="journal article" date="1998" name="Science">
        <title>Genome sequence of the nematode C. elegans: a platform for investigating biology.</title>
        <authorList>
            <consortium name="The C. elegans sequencing consortium"/>
        </authorList>
    </citation>
    <scope>NUCLEOTIDE SEQUENCE [LARGE SCALE GENOMIC DNA]</scope>
    <source>
        <strain>Bristol N2</strain>
    </source>
</reference>
<gene>
    <name evidence="4" type="primary">emg-1</name>
    <name evidence="4" type="ORF">Y39A1A.14</name>
</gene>
<organism>
    <name type="scientific">Caenorhabditis elegans</name>
    <dbReference type="NCBI Taxonomy" id="6239"/>
    <lineage>
        <taxon>Eukaryota</taxon>
        <taxon>Metazoa</taxon>
        <taxon>Ecdysozoa</taxon>
        <taxon>Nematoda</taxon>
        <taxon>Chromadorea</taxon>
        <taxon>Rhabditida</taxon>
        <taxon>Rhabditina</taxon>
        <taxon>Rhabditomorpha</taxon>
        <taxon>Rhabditoidea</taxon>
        <taxon>Rhabditidae</taxon>
        <taxon>Peloderinae</taxon>
        <taxon>Caenorhabditis</taxon>
    </lineage>
</organism>
<evidence type="ECO:0000250" key="1">
    <source>
        <dbReference type="UniProtKB" id="Q06287"/>
    </source>
</evidence>
<evidence type="ECO:0000250" key="2">
    <source>
        <dbReference type="UniProtKB" id="Q92979"/>
    </source>
</evidence>
<evidence type="ECO:0000305" key="3"/>
<evidence type="ECO:0000312" key="4">
    <source>
        <dbReference type="WormBase" id="Y39A1A.14"/>
    </source>
</evidence>
<dbReference type="EC" id="2.1.1.-" evidence="2"/>
<dbReference type="EMBL" id="AL031633">
    <property type="protein sequence ID" value="CAA21025.1"/>
    <property type="molecule type" value="Genomic_DNA"/>
</dbReference>
<dbReference type="PIR" id="T26736">
    <property type="entry name" value="T26736"/>
</dbReference>
<dbReference type="RefSeq" id="NP_499349.1">
    <property type="nucleotide sequence ID" value="NM_066948.3"/>
</dbReference>
<dbReference type="SMR" id="Q9XX15"/>
<dbReference type="BioGRID" id="41677">
    <property type="interactions" value="13"/>
</dbReference>
<dbReference type="FunCoup" id="Q9XX15">
    <property type="interactions" value="2367"/>
</dbReference>
<dbReference type="IntAct" id="Q9XX15">
    <property type="interactions" value="1"/>
</dbReference>
<dbReference type="STRING" id="6239.Y39A1A.14.1"/>
<dbReference type="PaxDb" id="6239-Y39A1A.14"/>
<dbReference type="PeptideAtlas" id="Q9XX15"/>
<dbReference type="EnsemblMetazoa" id="Y39A1A.14.1">
    <property type="protein sequence ID" value="Y39A1A.14.1"/>
    <property type="gene ID" value="WBGene00012652"/>
</dbReference>
<dbReference type="UCSC" id="Y39A1A.14">
    <property type="organism name" value="c. elegans"/>
</dbReference>
<dbReference type="AGR" id="WB:WBGene00012652"/>
<dbReference type="WormBase" id="Y39A1A.14">
    <property type="protein sequence ID" value="CE19133"/>
    <property type="gene ID" value="WBGene00012652"/>
    <property type="gene designation" value="emg-1"/>
</dbReference>
<dbReference type="eggNOG" id="KOG3073">
    <property type="taxonomic scope" value="Eukaryota"/>
</dbReference>
<dbReference type="GeneTree" id="ENSGT00390000000305"/>
<dbReference type="HOGENOM" id="CLU_055846_1_1_1"/>
<dbReference type="InParanoid" id="Q9XX15"/>
<dbReference type="OMA" id="VHNTFEL"/>
<dbReference type="OrthoDB" id="269804at2759"/>
<dbReference type="PhylomeDB" id="Q9XX15"/>
<dbReference type="Reactome" id="R-CEL-6791226">
    <property type="pathway name" value="Major pathway of rRNA processing in the nucleolus and cytosol"/>
</dbReference>
<dbReference type="PRO" id="PR:Q9XX15"/>
<dbReference type="Proteomes" id="UP000001940">
    <property type="component" value="Chromosome III"/>
</dbReference>
<dbReference type="Bgee" id="WBGene00012652">
    <property type="expression patterns" value="Expressed in germ line (C elegans) and 4 other cell types or tissues"/>
</dbReference>
<dbReference type="GO" id="GO:0005730">
    <property type="term" value="C:nucleolus"/>
    <property type="evidence" value="ECO:0007669"/>
    <property type="project" value="UniProtKB-SubCell"/>
</dbReference>
<dbReference type="GO" id="GO:0005634">
    <property type="term" value="C:nucleus"/>
    <property type="evidence" value="ECO:0000318"/>
    <property type="project" value="GO_Central"/>
</dbReference>
<dbReference type="GO" id="GO:0032040">
    <property type="term" value="C:small-subunit processome"/>
    <property type="evidence" value="ECO:0000318"/>
    <property type="project" value="GO_Central"/>
</dbReference>
<dbReference type="GO" id="GO:0070037">
    <property type="term" value="F:rRNA (pseudouridine) methyltransferase activity"/>
    <property type="evidence" value="ECO:0000250"/>
    <property type="project" value="UniProtKB"/>
</dbReference>
<dbReference type="GO" id="GO:0019843">
    <property type="term" value="F:rRNA binding"/>
    <property type="evidence" value="ECO:0000318"/>
    <property type="project" value="GO_Central"/>
</dbReference>
<dbReference type="GO" id="GO:0070475">
    <property type="term" value="P:rRNA base methylation"/>
    <property type="evidence" value="ECO:0000318"/>
    <property type="project" value="GO_Central"/>
</dbReference>
<dbReference type="CDD" id="cd18088">
    <property type="entry name" value="Nep1-like"/>
    <property type="match status" value="1"/>
</dbReference>
<dbReference type="FunFam" id="3.40.1280.10:FF:000003">
    <property type="entry name" value="Ribosomal RNA small subunit methyltransferase"/>
    <property type="match status" value="1"/>
</dbReference>
<dbReference type="Gene3D" id="3.40.1280.10">
    <property type="match status" value="1"/>
</dbReference>
<dbReference type="InterPro" id="IPR029028">
    <property type="entry name" value="Alpha/beta_knot_MTases"/>
</dbReference>
<dbReference type="InterPro" id="IPR005304">
    <property type="entry name" value="Rbsml_bgen_MeTrfase_EMG1/NEP1"/>
</dbReference>
<dbReference type="InterPro" id="IPR029026">
    <property type="entry name" value="tRNA_m1G_MTases_N"/>
</dbReference>
<dbReference type="PANTHER" id="PTHR12636">
    <property type="entry name" value="NEP1/MRA1"/>
    <property type="match status" value="1"/>
</dbReference>
<dbReference type="PANTHER" id="PTHR12636:SF5">
    <property type="entry name" value="RIBOSOMAL RNA SMALL SUBUNIT METHYLTRANSFERASE NEP1"/>
    <property type="match status" value="1"/>
</dbReference>
<dbReference type="Pfam" id="PF03587">
    <property type="entry name" value="EMG1"/>
    <property type="match status" value="1"/>
</dbReference>
<dbReference type="SUPFAM" id="SSF75217">
    <property type="entry name" value="alpha/beta knot"/>
    <property type="match status" value="1"/>
</dbReference>
<sequence length="231" mass="25765">MSHEYDTVAPPNAKRMKTDNQLEDKKILYVVLEGCSLETAKVGGEYAILSSDKHANFLRKQKKDPADYRPDILHQCLLNLLDSPLNRAGKLRVFFRTSKNVLVDVSPQCRIPRTFDRFCGLMVQLLHKLSIRAAETTQKLMSVVKNPVSNHLPVGSRKMLMSFNVPELTMANKLVAPETDEPLVLIIGGIARGKIVVDYNDSETKISNYPLSAALTCAKVTSGLEEIWGII</sequence>
<accession>Q9XX15</accession>
<comment type="function">
    <text evidence="1 2">S-adenosyl-L-methionine-dependent pseudouridine N(1)-methyltransferase that methylates a pseudouridine in 18S rRNA. Involved the biosynthesis of the hypermodified N1-methyl-N3-(3-amino-3-carboxypropyl) pseudouridine (m1acp3-Psi) conserved in eukaryotic 18S rRNA. Also has an essential role in 40S ribosomal subunit biogenesis independent on its methyltransferase activity, facilitating the incorporation of ribosomal protein S19 during the formation of pre-ribosomes.</text>
</comment>
<comment type="catalytic activity">
    <reaction evidence="2">
        <text>a pseudouridine in rRNA + S-adenosyl-L-methionine = an N(1)-methylpseudouridine in rRNA + S-adenosyl-L-homocysteine + H(+)</text>
        <dbReference type="Rhea" id="RHEA:46696"/>
        <dbReference type="Rhea" id="RHEA-COMP:11634"/>
        <dbReference type="Rhea" id="RHEA-COMP:13933"/>
        <dbReference type="ChEBI" id="CHEBI:15378"/>
        <dbReference type="ChEBI" id="CHEBI:57856"/>
        <dbReference type="ChEBI" id="CHEBI:59789"/>
        <dbReference type="ChEBI" id="CHEBI:65314"/>
        <dbReference type="ChEBI" id="CHEBI:74890"/>
    </reaction>
</comment>
<comment type="subunit">
    <text evidence="1">Homodimer.</text>
</comment>
<comment type="subcellular location">
    <subcellularLocation>
        <location evidence="2">Nucleus</location>
        <location evidence="2">Nucleolus</location>
    </subcellularLocation>
</comment>
<comment type="similarity">
    <text evidence="3">Belongs to the class IV-like SAM-binding methyltransferase superfamily. RNA methyltransferase NEP1 family.</text>
</comment>
<keyword id="KW-0489">Methyltransferase</keyword>
<keyword id="KW-0539">Nucleus</keyword>
<keyword id="KW-1185">Reference proteome</keyword>
<keyword id="KW-0690">Ribosome biogenesis</keyword>
<keyword id="KW-0694">RNA-binding</keyword>
<keyword id="KW-0698">rRNA processing</keyword>
<keyword id="KW-0699">rRNA-binding</keyword>
<keyword id="KW-0949">S-adenosyl-L-methionine</keyword>
<keyword id="KW-0808">Transferase</keyword>